<dbReference type="EMBL" id="L42023">
    <property type="protein sequence ID" value="AAC23131.1"/>
    <property type="molecule type" value="Genomic_DNA"/>
</dbReference>
<dbReference type="SMR" id="O86241"/>
<dbReference type="STRING" id="71421.HI_1466.1"/>
<dbReference type="EnsemblBacteria" id="AAC23131">
    <property type="protein sequence ID" value="AAC23131"/>
    <property type="gene ID" value="HI_1466.1"/>
</dbReference>
<dbReference type="KEGG" id="hin:HI_1466.1"/>
<dbReference type="eggNOG" id="COG4774">
    <property type="taxonomic scope" value="Bacteria"/>
</dbReference>
<dbReference type="HOGENOM" id="CLU_904624_0_0_6"/>
<dbReference type="PhylomeDB" id="O86241"/>
<dbReference type="Proteomes" id="UP000000579">
    <property type="component" value="Chromosome"/>
</dbReference>
<dbReference type="GO" id="GO:0009279">
    <property type="term" value="C:cell outer membrane"/>
    <property type="evidence" value="ECO:0007669"/>
    <property type="project" value="UniProtKB-SubCell"/>
</dbReference>
<dbReference type="Gene3D" id="2.40.170.20">
    <property type="entry name" value="TonB-dependent receptor, beta-barrel domain"/>
    <property type="match status" value="1"/>
</dbReference>
<dbReference type="InterPro" id="IPR039426">
    <property type="entry name" value="TonB-dep_rcpt-like"/>
</dbReference>
<dbReference type="InterPro" id="IPR000531">
    <property type="entry name" value="TonB-dep_rcpt_b-brl"/>
</dbReference>
<dbReference type="InterPro" id="IPR036942">
    <property type="entry name" value="TonB_rcpt_b-brl_sf"/>
</dbReference>
<dbReference type="PANTHER" id="PTHR32552:SF85">
    <property type="entry name" value="BLL7968 PROTEIN"/>
    <property type="match status" value="1"/>
</dbReference>
<dbReference type="PANTHER" id="PTHR32552">
    <property type="entry name" value="FERRICHROME IRON RECEPTOR-RELATED"/>
    <property type="match status" value="1"/>
</dbReference>
<dbReference type="Pfam" id="PF00593">
    <property type="entry name" value="TonB_dep_Rec_b-barrel"/>
    <property type="match status" value="1"/>
</dbReference>
<dbReference type="SUPFAM" id="SSF56935">
    <property type="entry name" value="Porins"/>
    <property type="match status" value="1"/>
</dbReference>
<dbReference type="PROSITE" id="PS52016">
    <property type="entry name" value="TONB_DEPENDENT_REC_3"/>
    <property type="match status" value="1"/>
</dbReference>
<organism>
    <name type="scientific">Haemophilus influenzae (strain ATCC 51907 / DSM 11121 / KW20 / Rd)</name>
    <dbReference type="NCBI Taxonomy" id="71421"/>
    <lineage>
        <taxon>Bacteria</taxon>
        <taxon>Pseudomonadati</taxon>
        <taxon>Pseudomonadota</taxon>
        <taxon>Gammaproteobacteria</taxon>
        <taxon>Pasteurellales</taxon>
        <taxon>Pasteurellaceae</taxon>
        <taxon>Haemophilus</taxon>
    </lineage>
</organism>
<reference key="1">
    <citation type="journal article" date="1995" name="Science">
        <title>Whole-genome random sequencing and assembly of Haemophilus influenzae Rd.</title>
        <authorList>
            <person name="Fleischmann R.D."/>
            <person name="Adams M.D."/>
            <person name="White O."/>
            <person name="Clayton R.A."/>
            <person name="Kirkness E.F."/>
            <person name="Kerlavage A.R."/>
            <person name="Bult C.J."/>
            <person name="Tomb J.-F."/>
            <person name="Dougherty B.A."/>
            <person name="Merrick J.M."/>
            <person name="McKenney K."/>
            <person name="Sutton G.G."/>
            <person name="FitzHugh W."/>
            <person name="Fields C.A."/>
            <person name="Gocayne J.D."/>
            <person name="Scott J.D."/>
            <person name="Shirley R."/>
            <person name="Liu L.-I."/>
            <person name="Glodek A."/>
            <person name="Kelley J.M."/>
            <person name="Weidman J.F."/>
            <person name="Phillips C.A."/>
            <person name="Spriggs T."/>
            <person name="Hedblom E."/>
            <person name="Cotton M.D."/>
            <person name="Utterback T.R."/>
            <person name="Hanna M.C."/>
            <person name="Nguyen D.T."/>
            <person name="Saudek D.M."/>
            <person name="Brandon R.C."/>
            <person name="Fine L.D."/>
            <person name="Fritchman J.L."/>
            <person name="Fuhrmann J.L."/>
            <person name="Geoghagen N.S.M."/>
            <person name="Gnehm C.L."/>
            <person name="McDonald L.A."/>
            <person name="Small K.V."/>
            <person name="Fraser C.M."/>
            <person name="Smith H.O."/>
            <person name="Venter J.C."/>
        </authorList>
    </citation>
    <scope>NUCLEOTIDE SEQUENCE [LARGE SCALE GENOMIC DNA]</scope>
    <source>
        <strain>ATCC 51907 / DSM 11121 / KW20 / Rd</strain>
    </source>
</reference>
<reference key="2">
    <citation type="submission" date="1998-05" db="EMBL/GenBank/DDBJ databases">
        <authorList>
            <person name="White O."/>
            <person name="Clayton R.A."/>
            <person name="Kerlavage A.R."/>
            <person name="Fleischmann R.D."/>
            <person name="Peterson J."/>
            <person name="Hickey E."/>
            <person name="Dodson R."/>
            <person name="Gwinn M."/>
        </authorList>
    </citation>
    <scope>SEQUENCE REVISION</scope>
</reference>
<gene>
    <name type="ordered locus">HI_1466.1</name>
</gene>
<keyword id="KW-0998">Cell outer membrane</keyword>
<keyword id="KW-0472">Membrane</keyword>
<keyword id="KW-0675">Receptor</keyword>
<keyword id="KW-1185">Reference proteome</keyword>
<keyword id="KW-0798">TonB box</keyword>
<keyword id="KW-0812">Transmembrane</keyword>
<keyword id="KW-1134">Transmembrane beta strand</keyword>
<keyword id="KW-0813">Transport</keyword>
<feature type="chain" id="PRO_0000098337" description="Uncharacterized TonB-dependent receptor HI_1466.1">
    <location>
        <begin position="1"/>
        <end position="345"/>
    </location>
</feature>
<feature type="domain" description="TBDR beta-barrel" evidence="1">
    <location>
        <begin position="1"/>
        <end position="345"/>
    </location>
</feature>
<feature type="domain" description="TBDR plug" evidence="1">
    <location>
        <position position="1"/>
    </location>
</feature>
<feature type="short sequence motif" description="TonB C-terminal box">
    <location>
        <begin position="328"/>
        <end position="345"/>
    </location>
</feature>
<name>Y146A_HAEIN</name>
<proteinExistence type="inferred from homology"/>
<comment type="subcellular location">
    <subcellularLocation>
        <location evidence="1">Cell outer membrane</location>
        <topology evidence="1">Multi-pass membrane protein</topology>
    </subcellularLocation>
</comment>
<comment type="similarity">
    <text evidence="2">Belongs to the TonB-dependent receptor family.</text>
</comment>
<sequence length="345" mass="38745">MDLGPIYNTRDINDGKVINIDNPNYTNPVAIKKNENNNAYQFNHLKTLGLYIQNTTYFTDNFIITGGLRYEYFDQVVGRSTLKNIRSGYLAQKDGKLLYQLGSVYKFTPNIATFFNHAESFRPQNNRTLIINGELPAEQGKSFETGLKYENAYLNATVALFNINKRNVAETVNVNGTNELQIVGKQRSRGIEFDLNGQLTDNLSIAANYTYTKVKNLENHNNKLAVGKQLSGVPKHQASLFLAYNIGEFDFGNIRVGGGARYLGSWYAYNNTYTKAYKLPQAIVYDTFIAYDTKISGKKVSFQLNGKNLSNKVYSPSTSGNASRTLIPVALGYAREVILNTKIEF</sequence>
<evidence type="ECO:0000255" key="1">
    <source>
        <dbReference type="PROSITE-ProRule" id="PRU01360"/>
    </source>
</evidence>
<evidence type="ECO:0000305" key="2"/>
<accession>O86241</accession>
<protein>
    <recommendedName>
        <fullName>Uncharacterized TonB-dependent receptor HI_1466.1</fullName>
    </recommendedName>
</protein>